<name>RSMG_CAMHC</name>
<keyword id="KW-0963">Cytoplasm</keyword>
<keyword id="KW-0489">Methyltransferase</keyword>
<keyword id="KW-1185">Reference proteome</keyword>
<keyword id="KW-0698">rRNA processing</keyword>
<keyword id="KW-0949">S-adenosyl-L-methionine</keyword>
<keyword id="KW-0808">Transferase</keyword>
<accession>A7I3X1</accession>
<organism>
    <name type="scientific">Campylobacter hominis (strain ATCC BAA-381 / DSM 21671 / CCUG 45161 / LMG 19568 / NCTC 13146 / CH001A)</name>
    <dbReference type="NCBI Taxonomy" id="360107"/>
    <lineage>
        <taxon>Bacteria</taxon>
        <taxon>Pseudomonadati</taxon>
        <taxon>Campylobacterota</taxon>
        <taxon>Epsilonproteobacteria</taxon>
        <taxon>Campylobacterales</taxon>
        <taxon>Campylobacteraceae</taxon>
        <taxon>Campylobacter</taxon>
    </lineage>
</organism>
<dbReference type="EC" id="2.1.1.170" evidence="1"/>
<dbReference type="EMBL" id="CP000776">
    <property type="protein sequence ID" value="ABS51378.1"/>
    <property type="molecule type" value="Genomic_DNA"/>
</dbReference>
<dbReference type="RefSeq" id="WP_012109518.1">
    <property type="nucleotide sequence ID" value="NC_009714.1"/>
</dbReference>
<dbReference type="SMR" id="A7I3X1"/>
<dbReference type="STRING" id="360107.CHAB381_1700"/>
<dbReference type="KEGG" id="cha:CHAB381_1700"/>
<dbReference type="eggNOG" id="COG0357">
    <property type="taxonomic scope" value="Bacteria"/>
</dbReference>
<dbReference type="HOGENOM" id="CLU_065341_2_1_7"/>
<dbReference type="OrthoDB" id="9808773at2"/>
<dbReference type="Proteomes" id="UP000002407">
    <property type="component" value="Chromosome"/>
</dbReference>
<dbReference type="GO" id="GO:0005829">
    <property type="term" value="C:cytosol"/>
    <property type="evidence" value="ECO:0007669"/>
    <property type="project" value="TreeGrafter"/>
</dbReference>
<dbReference type="GO" id="GO:0070043">
    <property type="term" value="F:rRNA (guanine-N7-)-methyltransferase activity"/>
    <property type="evidence" value="ECO:0007669"/>
    <property type="project" value="UniProtKB-UniRule"/>
</dbReference>
<dbReference type="Gene3D" id="3.40.50.150">
    <property type="entry name" value="Vaccinia Virus protein VP39"/>
    <property type="match status" value="1"/>
</dbReference>
<dbReference type="HAMAP" id="MF_00074">
    <property type="entry name" value="16SrRNA_methyltr_G"/>
    <property type="match status" value="1"/>
</dbReference>
<dbReference type="InterPro" id="IPR003682">
    <property type="entry name" value="rRNA_ssu_MeTfrase_G"/>
</dbReference>
<dbReference type="InterPro" id="IPR029063">
    <property type="entry name" value="SAM-dependent_MTases_sf"/>
</dbReference>
<dbReference type="NCBIfam" id="TIGR00138">
    <property type="entry name" value="rsmG_gidB"/>
    <property type="match status" value="1"/>
</dbReference>
<dbReference type="PANTHER" id="PTHR31760">
    <property type="entry name" value="S-ADENOSYL-L-METHIONINE-DEPENDENT METHYLTRANSFERASES SUPERFAMILY PROTEIN"/>
    <property type="match status" value="1"/>
</dbReference>
<dbReference type="PANTHER" id="PTHR31760:SF0">
    <property type="entry name" value="S-ADENOSYL-L-METHIONINE-DEPENDENT METHYLTRANSFERASES SUPERFAMILY PROTEIN"/>
    <property type="match status" value="1"/>
</dbReference>
<dbReference type="Pfam" id="PF02527">
    <property type="entry name" value="GidB"/>
    <property type="match status" value="1"/>
</dbReference>
<dbReference type="PIRSF" id="PIRSF003078">
    <property type="entry name" value="GidB"/>
    <property type="match status" value="1"/>
</dbReference>
<dbReference type="SUPFAM" id="SSF53335">
    <property type="entry name" value="S-adenosyl-L-methionine-dependent methyltransferases"/>
    <property type="match status" value="1"/>
</dbReference>
<reference key="1">
    <citation type="submission" date="2007-07" db="EMBL/GenBank/DDBJ databases">
        <title>Complete genome sequence of Campylobacter hominis ATCC BAA-381, a commensal isolated from the human gastrointestinal tract.</title>
        <authorList>
            <person name="Fouts D.E."/>
            <person name="Mongodin E.F."/>
            <person name="Puiu D."/>
            <person name="Sebastian Y."/>
            <person name="Miller W.G."/>
            <person name="Mandrell R.E."/>
            <person name="Nelson K.E."/>
        </authorList>
    </citation>
    <scope>NUCLEOTIDE SEQUENCE [LARGE SCALE GENOMIC DNA]</scope>
    <source>
        <strain>ATCC BAA-381 / DSM 21671 / CCUG 45161 / LMG 19568 / NCTC 13146 / CH001A</strain>
    </source>
</reference>
<feature type="chain" id="PRO_0000342909" description="Ribosomal RNA small subunit methyltransferase G">
    <location>
        <begin position="1"/>
        <end position="183"/>
    </location>
</feature>
<feature type="binding site" evidence="1">
    <location>
        <position position="60"/>
    </location>
    <ligand>
        <name>S-adenosyl-L-methionine</name>
        <dbReference type="ChEBI" id="CHEBI:59789"/>
    </ligand>
</feature>
<feature type="binding site" evidence="1">
    <location>
        <position position="65"/>
    </location>
    <ligand>
        <name>S-adenosyl-L-methionine</name>
        <dbReference type="ChEBI" id="CHEBI:59789"/>
    </ligand>
</feature>
<feature type="binding site" evidence="1">
    <location>
        <begin position="111"/>
        <end position="112"/>
    </location>
    <ligand>
        <name>S-adenosyl-L-methionine</name>
        <dbReference type="ChEBI" id="CHEBI:59789"/>
    </ligand>
</feature>
<feature type="binding site" evidence="1">
    <location>
        <position position="125"/>
    </location>
    <ligand>
        <name>S-adenosyl-L-methionine</name>
        <dbReference type="ChEBI" id="CHEBI:59789"/>
    </ligand>
</feature>
<evidence type="ECO:0000255" key="1">
    <source>
        <dbReference type="HAMAP-Rule" id="MF_00074"/>
    </source>
</evidence>
<protein>
    <recommendedName>
        <fullName evidence="1">Ribosomal RNA small subunit methyltransferase G</fullName>
        <ecNumber evidence="1">2.1.1.170</ecNumber>
    </recommendedName>
    <alternativeName>
        <fullName evidence="1">16S rRNA 7-methylguanosine methyltransferase</fullName>
        <shortName evidence="1">16S rRNA m7G methyltransferase</shortName>
    </alternativeName>
</protein>
<proteinExistence type="inferred from homology"/>
<gene>
    <name evidence="1" type="primary">rsmG</name>
    <name type="ordered locus">CHAB381_1700</name>
</gene>
<sequence>MIIKKPENFNEQIEQFGKCLEKFNKIHSITNYNDLSAVIEDSLEGLKFITEMPKVAIDIGSGAGFPAIFLAMVLPYTKWHLFEPNTKKAAFLTYAKVNLKLKNIIIHNTKIENETPFIADLITSRAVMKVPDLIKISHGFFDTHTKFLFYKGSNVKDELGNLKAEIFENNMRKYALLKGNDVC</sequence>
<comment type="function">
    <text evidence="1">Specifically methylates the N7 position of guanine in position 527 of 16S rRNA.</text>
</comment>
<comment type="catalytic activity">
    <reaction evidence="1">
        <text>guanosine(527) in 16S rRNA + S-adenosyl-L-methionine = N(7)-methylguanosine(527) in 16S rRNA + S-adenosyl-L-homocysteine</text>
        <dbReference type="Rhea" id="RHEA:42732"/>
        <dbReference type="Rhea" id="RHEA-COMP:10209"/>
        <dbReference type="Rhea" id="RHEA-COMP:10210"/>
        <dbReference type="ChEBI" id="CHEBI:57856"/>
        <dbReference type="ChEBI" id="CHEBI:59789"/>
        <dbReference type="ChEBI" id="CHEBI:74269"/>
        <dbReference type="ChEBI" id="CHEBI:74480"/>
        <dbReference type="EC" id="2.1.1.170"/>
    </reaction>
</comment>
<comment type="subcellular location">
    <subcellularLocation>
        <location evidence="1">Cytoplasm</location>
    </subcellularLocation>
</comment>
<comment type="similarity">
    <text evidence="1">Belongs to the methyltransferase superfamily. RNA methyltransferase RsmG family.</text>
</comment>